<sequence>MTEQVRVAITGGSGRMGRTLIEAAKQNELILLGAAIERAGSTLMGVDAGELAGVGAMNVAITDSLDKAVDDFDVLIDFTSPEASVVHTDWCARNGKAIVIGTTGFNHAQKEQISAYGDQIPIVMAPNMAVGVNLMWKLLEVAAEVMGDYCDIEIIEGHHRYKKDAPSGTALKMGEVIAETLGRDLEKCAVYGREGITGERDRGTIGFATVRAGDIVGEHTALFADIGERLEITHKASSRMTFANGAMRAATWLVEQDAGLYDMQQVLGLKGITI</sequence>
<keyword id="KW-0028">Amino-acid biosynthesis</keyword>
<keyword id="KW-0963">Cytoplasm</keyword>
<keyword id="KW-0220">Diaminopimelate biosynthesis</keyword>
<keyword id="KW-0457">Lysine biosynthesis</keyword>
<keyword id="KW-0520">NAD</keyword>
<keyword id="KW-0521">NADP</keyword>
<keyword id="KW-0560">Oxidoreductase</keyword>
<keyword id="KW-1185">Reference proteome</keyword>
<organism>
    <name type="scientific">Shewanella pealeana (strain ATCC 700345 / ANG-SQ1)</name>
    <dbReference type="NCBI Taxonomy" id="398579"/>
    <lineage>
        <taxon>Bacteria</taxon>
        <taxon>Pseudomonadati</taxon>
        <taxon>Pseudomonadota</taxon>
        <taxon>Gammaproteobacteria</taxon>
        <taxon>Alteromonadales</taxon>
        <taxon>Shewanellaceae</taxon>
        <taxon>Shewanella</taxon>
    </lineage>
</organism>
<name>DAPB_SHEPA</name>
<dbReference type="EC" id="1.17.1.8" evidence="1"/>
<dbReference type="EMBL" id="CP000851">
    <property type="protein sequence ID" value="ABV88393.1"/>
    <property type="molecule type" value="Genomic_DNA"/>
</dbReference>
<dbReference type="RefSeq" id="WP_012156297.1">
    <property type="nucleotide sequence ID" value="NC_009901.1"/>
</dbReference>
<dbReference type="SMR" id="A8H756"/>
<dbReference type="STRING" id="398579.Spea_3076"/>
<dbReference type="KEGG" id="spl:Spea_3076"/>
<dbReference type="eggNOG" id="COG0289">
    <property type="taxonomic scope" value="Bacteria"/>
</dbReference>
<dbReference type="HOGENOM" id="CLU_047479_2_1_6"/>
<dbReference type="OrthoDB" id="9790352at2"/>
<dbReference type="UniPathway" id="UPA00034">
    <property type="reaction ID" value="UER00018"/>
</dbReference>
<dbReference type="Proteomes" id="UP000002608">
    <property type="component" value="Chromosome"/>
</dbReference>
<dbReference type="GO" id="GO:0005829">
    <property type="term" value="C:cytosol"/>
    <property type="evidence" value="ECO:0007669"/>
    <property type="project" value="TreeGrafter"/>
</dbReference>
<dbReference type="GO" id="GO:0008839">
    <property type="term" value="F:4-hydroxy-tetrahydrodipicolinate reductase"/>
    <property type="evidence" value="ECO:0007669"/>
    <property type="project" value="UniProtKB-EC"/>
</dbReference>
<dbReference type="GO" id="GO:0051287">
    <property type="term" value="F:NAD binding"/>
    <property type="evidence" value="ECO:0007669"/>
    <property type="project" value="UniProtKB-UniRule"/>
</dbReference>
<dbReference type="GO" id="GO:0050661">
    <property type="term" value="F:NADP binding"/>
    <property type="evidence" value="ECO:0007669"/>
    <property type="project" value="UniProtKB-UniRule"/>
</dbReference>
<dbReference type="GO" id="GO:0016726">
    <property type="term" value="F:oxidoreductase activity, acting on CH or CH2 groups, NAD or NADP as acceptor"/>
    <property type="evidence" value="ECO:0007669"/>
    <property type="project" value="UniProtKB-UniRule"/>
</dbReference>
<dbReference type="GO" id="GO:0019877">
    <property type="term" value="P:diaminopimelate biosynthetic process"/>
    <property type="evidence" value="ECO:0007669"/>
    <property type="project" value="UniProtKB-UniRule"/>
</dbReference>
<dbReference type="GO" id="GO:0009089">
    <property type="term" value="P:lysine biosynthetic process via diaminopimelate"/>
    <property type="evidence" value="ECO:0007669"/>
    <property type="project" value="UniProtKB-UniRule"/>
</dbReference>
<dbReference type="CDD" id="cd02274">
    <property type="entry name" value="DHDPR_N"/>
    <property type="match status" value="1"/>
</dbReference>
<dbReference type="FunFam" id="3.30.360.10:FF:000004">
    <property type="entry name" value="4-hydroxy-tetrahydrodipicolinate reductase"/>
    <property type="match status" value="1"/>
</dbReference>
<dbReference type="FunFam" id="3.40.50.720:FF:000048">
    <property type="entry name" value="4-hydroxy-tetrahydrodipicolinate reductase"/>
    <property type="match status" value="1"/>
</dbReference>
<dbReference type="Gene3D" id="3.30.360.10">
    <property type="entry name" value="Dihydrodipicolinate Reductase, domain 2"/>
    <property type="match status" value="1"/>
</dbReference>
<dbReference type="Gene3D" id="3.40.50.720">
    <property type="entry name" value="NAD(P)-binding Rossmann-like Domain"/>
    <property type="match status" value="1"/>
</dbReference>
<dbReference type="HAMAP" id="MF_00102">
    <property type="entry name" value="DapB"/>
    <property type="match status" value="1"/>
</dbReference>
<dbReference type="InterPro" id="IPR022663">
    <property type="entry name" value="DapB_C"/>
</dbReference>
<dbReference type="InterPro" id="IPR000846">
    <property type="entry name" value="DapB_N"/>
</dbReference>
<dbReference type="InterPro" id="IPR022664">
    <property type="entry name" value="DapB_N_CS"/>
</dbReference>
<dbReference type="InterPro" id="IPR023940">
    <property type="entry name" value="DHDPR_bac"/>
</dbReference>
<dbReference type="InterPro" id="IPR036291">
    <property type="entry name" value="NAD(P)-bd_dom_sf"/>
</dbReference>
<dbReference type="NCBIfam" id="TIGR00036">
    <property type="entry name" value="dapB"/>
    <property type="match status" value="1"/>
</dbReference>
<dbReference type="PANTHER" id="PTHR20836:SF0">
    <property type="entry name" value="4-HYDROXY-TETRAHYDRODIPICOLINATE REDUCTASE 1, CHLOROPLASTIC-RELATED"/>
    <property type="match status" value="1"/>
</dbReference>
<dbReference type="PANTHER" id="PTHR20836">
    <property type="entry name" value="DIHYDRODIPICOLINATE REDUCTASE"/>
    <property type="match status" value="1"/>
</dbReference>
<dbReference type="Pfam" id="PF05173">
    <property type="entry name" value="DapB_C"/>
    <property type="match status" value="1"/>
</dbReference>
<dbReference type="Pfam" id="PF01113">
    <property type="entry name" value="DapB_N"/>
    <property type="match status" value="1"/>
</dbReference>
<dbReference type="PIRSF" id="PIRSF000161">
    <property type="entry name" value="DHPR"/>
    <property type="match status" value="1"/>
</dbReference>
<dbReference type="SUPFAM" id="SSF55347">
    <property type="entry name" value="Glyceraldehyde-3-phosphate dehydrogenase-like, C-terminal domain"/>
    <property type="match status" value="1"/>
</dbReference>
<dbReference type="SUPFAM" id="SSF51735">
    <property type="entry name" value="NAD(P)-binding Rossmann-fold domains"/>
    <property type="match status" value="1"/>
</dbReference>
<dbReference type="PROSITE" id="PS01298">
    <property type="entry name" value="DAPB"/>
    <property type="match status" value="1"/>
</dbReference>
<reference key="1">
    <citation type="submission" date="2007-10" db="EMBL/GenBank/DDBJ databases">
        <title>Complete sequence of Shewanella pealeana ATCC 700345.</title>
        <authorList>
            <consortium name="US DOE Joint Genome Institute"/>
            <person name="Copeland A."/>
            <person name="Lucas S."/>
            <person name="Lapidus A."/>
            <person name="Barry K."/>
            <person name="Glavina del Rio T."/>
            <person name="Dalin E."/>
            <person name="Tice H."/>
            <person name="Pitluck S."/>
            <person name="Chertkov O."/>
            <person name="Brettin T."/>
            <person name="Bruce D."/>
            <person name="Detter J.C."/>
            <person name="Han C."/>
            <person name="Schmutz J."/>
            <person name="Larimer F."/>
            <person name="Land M."/>
            <person name="Hauser L."/>
            <person name="Kyrpides N."/>
            <person name="Kim E."/>
            <person name="Zhao J.-S.Z."/>
            <person name="Manno D."/>
            <person name="Hawari J."/>
            <person name="Richardson P."/>
        </authorList>
    </citation>
    <scope>NUCLEOTIDE SEQUENCE [LARGE SCALE GENOMIC DNA]</scope>
    <source>
        <strain>ATCC 700345 / ANG-SQ1</strain>
    </source>
</reference>
<proteinExistence type="inferred from homology"/>
<gene>
    <name evidence="1" type="primary">dapB</name>
    <name type="ordered locus">Spea_3076</name>
</gene>
<accession>A8H756</accession>
<evidence type="ECO:0000255" key="1">
    <source>
        <dbReference type="HAMAP-Rule" id="MF_00102"/>
    </source>
</evidence>
<evidence type="ECO:0000305" key="2"/>
<protein>
    <recommendedName>
        <fullName evidence="1">4-hydroxy-tetrahydrodipicolinate reductase</fullName>
        <shortName evidence="1">HTPA reductase</shortName>
        <ecNumber evidence="1">1.17.1.8</ecNumber>
    </recommendedName>
</protein>
<feature type="chain" id="PRO_1000075689" description="4-hydroxy-tetrahydrodipicolinate reductase">
    <location>
        <begin position="1"/>
        <end position="274"/>
    </location>
</feature>
<feature type="active site" description="Proton donor/acceptor" evidence="1">
    <location>
        <position position="158"/>
    </location>
</feature>
<feature type="active site" description="Proton donor" evidence="1">
    <location>
        <position position="162"/>
    </location>
</feature>
<feature type="binding site" evidence="1">
    <location>
        <begin position="11"/>
        <end position="16"/>
    </location>
    <ligand>
        <name>NAD(+)</name>
        <dbReference type="ChEBI" id="CHEBI:57540"/>
    </ligand>
</feature>
<feature type="binding site" evidence="1">
    <location>
        <position position="37"/>
    </location>
    <ligand>
        <name>NAD(+)</name>
        <dbReference type="ChEBI" id="CHEBI:57540"/>
    </ligand>
</feature>
<feature type="binding site" evidence="1">
    <location>
        <position position="38"/>
    </location>
    <ligand>
        <name>NADP(+)</name>
        <dbReference type="ChEBI" id="CHEBI:58349"/>
    </ligand>
</feature>
<feature type="binding site" evidence="1">
    <location>
        <begin position="101"/>
        <end position="103"/>
    </location>
    <ligand>
        <name>NAD(+)</name>
        <dbReference type="ChEBI" id="CHEBI:57540"/>
    </ligand>
</feature>
<feature type="binding site" evidence="1">
    <location>
        <begin position="125"/>
        <end position="128"/>
    </location>
    <ligand>
        <name>NAD(+)</name>
        <dbReference type="ChEBI" id="CHEBI:57540"/>
    </ligand>
</feature>
<feature type="binding site" evidence="1">
    <location>
        <position position="159"/>
    </location>
    <ligand>
        <name>(S)-2,3,4,5-tetrahydrodipicolinate</name>
        <dbReference type="ChEBI" id="CHEBI:16845"/>
    </ligand>
</feature>
<feature type="binding site" evidence="1">
    <location>
        <begin position="168"/>
        <end position="169"/>
    </location>
    <ligand>
        <name>(S)-2,3,4,5-tetrahydrodipicolinate</name>
        <dbReference type="ChEBI" id="CHEBI:16845"/>
    </ligand>
</feature>
<comment type="function">
    <text evidence="1">Catalyzes the conversion of 4-hydroxy-tetrahydrodipicolinate (HTPA) to tetrahydrodipicolinate.</text>
</comment>
<comment type="catalytic activity">
    <reaction evidence="1">
        <text>(S)-2,3,4,5-tetrahydrodipicolinate + NAD(+) + H2O = (2S,4S)-4-hydroxy-2,3,4,5-tetrahydrodipicolinate + NADH + H(+)</text>
        <dbReference type="Rhea" id="RHEA:35323"/>
        <dbReference type="ChEBI" id="CHEBI:15377"/>
        <dbReference type="ChEBI" id="CHEBI:15378"/>
        <dbReference type="ChEBI" id="CHEBI:16845"/>
        <dbReference type="ChEBI" id="CHEBI:57540"/>
        <dbReference type="ChEBI" id="CHEBI:57945"/>
        <dbReference type="ChEBI" id="CHEBI:67139"/>
        <dbReference type="EC" id="1.17.1.8"/>
    </reaction>
</comment>
<comment type="catalytic activity">
    <reaction evidence="1">
        <text>(S)-2,3,4,5-tetrahydrodipicolinate + NADP(+) + H2O = (2S,4S)-4-hydroxy-2,3,4,5-tetrahydrodipicolinate + NADPH + H(+)</text>
        <dbReference type="Rhea" id="RHEA:35331"/>
        <dbReference type="ChEBI" id="CHEBI:15377"/>
        <dbReference type="ChEBI" id="CHEBI:15378"/>
        <dbReference type="ChEBI" id="CHEBI:16845"/>
        <dbReference type="ChEBI" id="CHEBI:57783"/>
        <dbReference type="ChEBI" id="CHEBI:58349"/>
        <dbReference type="ChEBI" id="CHEBI:67139"/>
        <dbReference type="EC" id="1.17.1.8"/>
    </reaction>
</comment>
<comment type="pathway">
    <text evidence="1">Amino-acid biosynthesis; L-lysine biosynthesis via DAP pathway; (S)-tetrahydrodipicolinate from L-aspartate: step 4/4.</text>
</comment>
<comment type="subcellular location">
    <subcellularLocation>
        <location evidence="1">Cytoplasm</location>
    </subcellularLocation>
</comment>
<comment type="similarity">
    <text evidence="1">Belongs to the DapB family.</text>
</comment>
<comment type="caution">
    <text evidence="2">Was originally thought to be a dihydrodipicolinate reductase (DHDPR), catalyzing the conversion of dihydrodipicolinate to tetrahydrodipicolinate. However, it was shown in E.coli that the substrate of the enzymatic reaction is not dihydrodipicolinate (DHDP) but in fact (2S,4S)-4-hydroxy-2,3,4,5-tetrahydrodipicolinic acid (HTPA), the product released by the DapA-catalyzed reaction.</text>
</comment>